<organism>
    <name type="scientific">Bacillus licheniformis (strain ATCC 14580 / DSM 13 / JCM 2505 / CCUG 7422 / NBRC 12200 / NCIMB 9375 / NCTC 10341 / NRRL NRS-1264 / Gibson 46)</name>
    <dbReference type="NCBI Taxonomy" id="279010"/>
    <lineage>
        <taxon>Bacteria</taxon>
        <taxon>Bacillati</taxon>
        <taxon>Bacillota</taxon>
        <taxon>Bacilli</taxon>
        <taxon>Bacillales</taxon>
        <taxon>Bacillaceae</taxon>
        <taxon>Bacillus</taxon>
    </lineage>
</organism>
<comment type="function">
    <text evidence="1">Transfers and isomerizes the ribose moiety from AdoMet to the 7-aminomethyl group of 7-deazaguanine (preQ1-tRNA) to give epoxyqueuosine (oQ-tRNA).</text>
</comment>
<comment type="catalytic activity">
    <reaction evidence="1">
        <text>7-aminomethyl-7-carbaguanosine(34) in tRNA + S-adenosyl-L-methionine = epoxyqueuosine(34) in tRNA + adenine + L-methionine + 2 H(+)</text>
        <dbReference type="Rhea" id="RHEA:32155"/>
        <dbReference type="Rhea" id="RHEA-COMP:10342"/>
        <dbReference type="Rhea" id="RHEA-COMP:18582"/>
        <dbReference type="ChEBI" id="CHEBI:15378"/>
        <dbReference type="ChEBI" id="CHEBI:16708"/>
        <dbReference type="ChEBI" id="CHEBI:57844"/>
        <dbReference type="ChEBI" id="CHEBI:59789"/>
        <dbReference type="ChEBI" id="CHEBI:82833"/>
        <dbReference type="ChEBI" id="CHEBI:194443"/>
        <dbReference type="EC" id="2.4.99.17"/>
    </reaction>
</comment>
<comment type="pathway">
    <text evidence="1">tRNA modification; tRNA-queuosine biosynthesis.</text>
</comment>
<comment type="subunit">
    <text evidence="1">Monomer.</text>
</comment>
<comment type="subcellular location">
    <subcellularLocation>
        <location evidence="1">Cytoplasm</location>
    </subcellularLocation>
</comment>
<comment type="similarity">
    <text evidence="1">Belongs to the QueA family.</text>
</comment>
<gene>
    <name evidence="1" type="primary">queA</name>
    <name type="ordered locus">BLi02898</name>
    <name type="ordered locus">BL01141</name>
</gene>
<reference key="1">
    <citation type="journal article" date="2004" name="J. Mol. Microbiol. Biotechnol.">
        <title>The complete genome sequence of Bacillus licheniformis DSM13, an organism with great industrial potential.</title>
        <authorList>
            <person name="Veith B."/>
            <person name="Herzberg C."/>
            <person name="Steckel S."/>
            <person name="Feesche J."/>
            <person name="Maurer K.H."/>
            <person name="Ehrenreich P."/>
            <person name="Baeumer S."/>
            <person name="Henne A."/>
            <person name="Liesegang H."/>
            <person name="Merkl R."/>
            <person name="Ehrenreich A."/>
            <person name="Gottschalk G."/>
        </authorList>
    </citation>
    <scope>NUCLEOTIDE SEQUENCE [LARGE SCALE GENOMIC DNA]</scope>
    <source>
        <strain>ATCC 14580 / DSM 13 / JCM 2505 / CCUG 7422 / NBRC 12200 / NCIMB 9375 / NCTC 10341 / NRRL NRS-1264 / Gibson 46</strain>
    </source>
</reference>
<reference key="2">
    <citation type="journal article" date="2004" name="Genome Biol.">
        <title>Complete genome sequence of the industrial bacterium Bacillus licheniformis and comparisons with closely related Bacillus species.</title>
        <authorList>
            <person name="Rey M.W."/>
            <person name="Ramaiya P."/>
            <person name="Nelson B.A."/>
            <person name="Brody-Karpin S.D."/>
            <person name="Zaretsky E.J."/>
            <person name="Tang M."/>
            <person name="Lopez de Leon A."/>
            <person name="Xiang H."/>
            <person name="Gusti V."/>
            <person name="Clausen I.G."/>
            <person name="Olsen P.B."/>
            <person name="Rasmussen M.D."/>
            <person name="Andersen J.T."/>
            <person name="Joergensen P.L."/>
            <person name="Larsen T.S."/>
            <person name="Sorokin A."/>
            <person name="Bolotin A."/>
            <person name="Lapidus A."/>
            <person name="Galleron N."/>
            <person name="Ehrlich S.D."/>
            <person name="Berka R.M."/>
        </authorList>
    </citation>
    <scope>NUCLEOTIDE SEQUENCE [LARGE SCALE GENOMIC DNA]</scope>
    <source>
        <strain>ATCC 14580 / DSM 13 / JCM 2505 / CCUG 7422 / NBRC 12200 / NCIMB 9375 / NCTC 10341 / NRRL NRS-1264 / Gibson 46</strain>
    </source>
</reference>
<sequence>MKVELFDFDLPERLIAQVPLKERDASRLMVLDKKTGEITHSTFKHVIDFLNAGDCIVLNDTRVLPARLYGVKEETGAKVEVLLLKQEEGDVWETLVKPAKRVKRGTVLSFGDGRLTAVCTEELEHGGRKIEFRYEGIFYEVLESLGEMPLPPYIKEQLDDRERYQTVYSKKQGSAAAPTAGLHFTEEILDALREKGVHIAFITLHVGLGTFRPVSAENVEEHDMHAEFYEMSEETAALLNRVRQEGGRIISVGTTSTRTLETIASEHDGRFREASGWTSIFIYPGYTFRAIDGMITNFHLPKSSLIMLVSALAGREHVLSAYRTAVEHEYRFFSFGDAMLIK</sequence>
<evidence type="ECO:0000255" key="1">
    <source>
        <dbReference type="HAMAP-Rule" id="MF_00113"/>
    </source>
</evidence>
<dbReference type="EC" id="2.4.99.17" evidence="1"/>
<dbReference type="EMBL" id="AE017333">
    <property type="protein sequence ID" value="AAU41766.1"/>
    <property type="molecule type" value="Genomic_DNA"/>
</dbReference>
<dbReference type="EMBL" id="CP000002">
    <property type="protein sequence ID" value="AAU24403.1"/>
    <property type="molecule type" value="Genomic_DNA"/>
</dbReference>
<dbReference type="RefSeq" id="WP_003183982.1">
    <property type="nucleotide sequence ID" value="NC_006322.1"/>
</dbReference>
<dbReference type="SMR" id="Q65GP8"/>
<dbReference type="STRING" id="279010.BL01141"/>
<dbReference type="GeneID" id="92860508"/>
<dbReference type="KEGG" id="bld:BLi02898"/>
<dbReference type="KEGG" id="bli:BL01141"/>
<dbReference type="eggNOG" id="COG0809">
    <property type="taxonomic scope" value="Bacteria"/>
</dbReference>
<dbReference type="HOGENOM" id="CLU_039110_1_0_9"/>
<dbReference type="UniPathway" id="UPA00392"/>
<dbReference type="Proteomes" id="UP000000606">
    <property type="component" value="Chromosome"/>
</dbReference>
<dbReference type="Bgee" id="BL01141">
    <property type="expression patterns" value="Expressed in ovary and 12 other cell types or tissues"/>
</dbReference>
<dbReference type="GO" id="GO:0005737">
    <property type="term" value="C:cytoplasm"/>
    <property type="evidence" value="ECO:0007669"/>
    <property type="project" value="UniProtKB-SubCell"/>
</dbReference>
<dbReference type="GO" id="GO:0051075">
    <property type="term" value="F:S-adenosylmethionine:tRNA ribosyltransferase-isomerase activity"/>
    <property type="evidence" value="ECO:0007669"/>
    <property type="project" value="UniProtKB-EC"/>
</dbReference>
<dbReference type="GO" id="GO:0008616">
    <property type="term" value="P:queuosine biosynthetic process"/>
    <property type="evidence" value="ECO:0007669"/>
    <property type="project" value="UniProtKB-UniRule"/>
</dbReference>
<dbReference type="GO" id="GO:0002099">
    <property type="term" value="P:tRNA wobble guanine modification"/>
    <property type="evidence" value="ECO:0007669"/>
    <property type="project" value="TreeGrafter"/>
</dbReference>
<dbReference type="FunFam" id="2.40.10.240:FF:000002">
    <property type="entry name" value="S-adenosylmethionine:tRNA ribosyltransferase-isomerase"/>
    <property type="match status" value="1"/>
</dbReference>
<dbReference type="FunFam" id="3.40.1780.10:FF:000001">
    <property type="entry name" value="S-adenosylmethionine:tRNA ribosyltransferase-isomerase"/>
    <property type="match status" value="1"/>
</dbReference>
<dbReference type="Gene3D" id="2.40.10.240">
    <property type="entry name" value="QueA-like"/>
    <property type="match status" value="1"/>
</dbReference>
<dbReference type="Gene3D" id="3.40.1780.10">
    <property type="entry name" value="QueA-like"/>
    <property type="match status" value="1"/>
</dbReference>
<dbReference type="HAMAP" id="MF_00113">
    <property type="entry name" value="QueA"/>
    <property type="match status" value="1"/>
</dbReference>
<dbReference type="InterPro" id="IPR003699">
    <property type="entry name" value="QueA"/>
</dbReference>
<dbReference type="InterPro" id="IPR042118">
    <property type="entry name" value="QueA_dom1"/>
</dbReference>
<dbReference type="InterPro" id="IPR042119">
    <property type="entry name" value="QueA_dom2"/>
</dbReference>
<dbReference type="InterPro" id="IPR036100">
    <property type="entry name" value="QueA_sf"/>
</dbReference>
<dbReference type="NCBIfam" id="NF001140">
    <property type="entry name" value="PRK00147.1"/>
    <property type="match status" value="1"/>
</dbReference>
<dbReference type="NCBIfam" id="TIGR00113">
    <property type="entry name" value="queA"/>
    <property type="match status" value="1"/>
</dbReference>
<dbReference type="PANTHER" id="PTHR30307">
    <property type="entry name" value="S-ADENOSYLMETHIONINE:TRNA RIBOSYLTRANSFERASE-ISOMERASE"/>
    <property type="match status" value="1"/>
</dbReference>
<dbReference type="PANTHER" id="PTHR30307:SF0">
    <property type="entry name" value="S-ADENOSYLMETHIONINE:TRNA RIBOSYLTRANSFERASE-ISOMERASE"/>
    <property type="match status" value="1"/>
</dbReference>
<dbReference type="Pfam" id="PF02547">
    <property type="entry name" value="Queuosine_synth"/>
    <property type="match status" value="1"/>
</dbReference>
<dbReference type="SUPFAM" id="SSF111337">
    <property type="entry name" value="QueA-like"/>
    <property type="match status" value="1"/>
</dbReference>
<protein>
    <recommendedName>
        <fullName evidence="1">S-adenosylmethionine:tRNA ribosyltransferase-isomerase</fullName>
        <ecNumber evidence="1">2.4.99.17</ecNumber>
    </recommendedName>
    <alternativeName>
        <fullName evidence="1">Queuosine biosynthesis protein QueA</fullName>
    </alternativeName>
</protein>
<accession>Q65GP8</accession>
<accession>Q62S57</accession>
<name>QUEA_BACLD</name>
<feature type="chain" id="PRO_0000231316" description="S-adenosylmethionine:tRNA ribosyltransferase-isomerase">
    <location>
        <begin position="1"/>
        <end position="342"/>
    </location>
</feature>
<keyword id="KW-0963">Cytoplasm</keyword>
<keyword id="KW-0671">Queuosine biosynthesis</keyword>
<keyword id="KW-1185">Reference proteome</keyword>
<keyword id="KW-0949">S-adenosyl-L-methionine</keyword>
<keyword id="KW-0808">Transferase</keyword>
<proteinExistence type="inferred from homology"/>